<accession>Q7XPJ0</accession>
<accession>A0A0P0WGB9</accession>
<accession>A3AYE3</accession>
<accession>Q84VE4</accession>
<organism>
    <name type="scientific">Oryza sativa subsp. japonica</name>
    <name type="common">Rice</name>
    <dbReference type="NCBI Taxonomy" id="39947"/>
    <lineage>
        <taxon>Eukaryota</taxon>
        <taxon>Viridiplantae</taxon>
        <taxon>Streptophyta</taxon>
        <taxon>Embryophyta</taxon>
        <taxon>Tracheophyta</taxon>
        <taxon>Spermatophyta</taxon>
        <taxon>Magnoliopsida</taxon>
        <taxon>Liliopsida</taxon>
        <taxon>Poales</taxon>
        <taxon>Poaceae</taxon>
        <taxon>BOP clade</taxon>
        <taxon>Oryzoideae</taxon>
        <taxon>Oryzeae</taxon>
        <taxon>Oryzinae</taxon>
        <taxon>Oryza</taxon>
        <taxon>Oryza sativa</taxon>
    </lineage>
</organism>
<reference key="1">
    <citation type="journal article" date="2003" name="Plant Mol. Biol.">
        <title>Identification of rice (Oryza sativa) proteins linked to the cyclin-mediated regulation of the cell cycle.</title>
        <authorList>
            <person name="Cooper B."/>
            <person name="Hutchison D."/>
            <person name="Park S."/>
            <person name="Guimil S."/>
            <person name="Luginbuehl P."/>
            <person name="Ellero C."/>
            <person name="Goff S.A."/>
            <person name="Glazebrook J."/>
        </authorList>
    </citation>
    <scope>NUCLEOTIDE SEQUENCE [MRNA]</scope>
    <source>
        <strain>cv. Nipponbare</strain>
    </source>
</reference>
<reference key="2">
    <citation type="journal article" date="2002" name="Nature">
        <title>Sequence and analysis of rice chromosome 4.</title>
        <authorList>
            <person name="Feng Q."/>
            <person name="Zhang Y."/>
            <person name="Hao P."/>
            <person name="Wang S."/>
            <person name="Fu G."/>
            <person name="Huang Y."/>
            <person name="Li Y."/>
            <person name="Zhu J."/>
            <person name="Liu Y."/>
            <person name="Hu X."/>
            <person name="Jia P."/>
            <person name="Zhang Y."/>
            <person name="Zhao Q."/>
            <person name="Ying K."/>
            <person name="Yu S."/>
            <person name="Tang Y."/>
            <person name="Weng Q."/>
            <person name="Zhang L."/>
            <person name="Lu Y."/>
            <person name="Mu J."/>
            <person name="Lu Y."/>
            <person name="Zhang L.S."/>
            <person name="Yu Z."/>
            <person name="Fan D."/>
            <person name="Liu X."/>
            <person name="Lu T."/>
            <person name="Li C."/>
            <person name="Wu Y."/>
            <person name="Sun T."/>
            <person name="Lei H."/>
            <person name="Li T."/>
            <person name="Hu H."/>
            <person name="Guan J."/>
            <person name="Wu M."/>
            <person name="Zhang R."/>
            <person name="Zhou B."/>
            <person name="Chen Z."/>
            <person name="Chen L."/>
            <person name="Jin Z."/>
            <person name="Wang R."/>
            <person name="Yin H."/>
            <person name="Cai Z."/>
            <person name="Ren S."/>
            <person name="Lv G."/>
            <person name="Gu W."/>
            <person name="Zhu G."/>
            <person name="Tu Y."/>
            <person name="Jia J."/>
            <person name="Zhang Y."/>
            <person name="Chen J."/>
            <person name="Kang H."/>
            <person name="Chen X."/>
            <person name="Shao C."/>
            <person name="Sun Y."/>
            <person name="Hu Q."/>
            <person name="Zhang X."/>
            <person name="Zhang W."/>
            <person name="Wang L."/>
            <person name="Ding C."/>
            <person name="Sheng H."/>
            <person name="Gu J."/>
            <person name="Chen S."/>
            <person name="Ni L."/>
            <person name="Zhu F."/>
            <person name="Chen W."/>
            <person name="Lan L."/>
            <person name="Lai Y."/>
            <person name="Cheng Z."/>
            <person name="Gu M."/>
            <person name="Jiang J."/>
            <person name="Li J."/>
            <person name="Hong G."/>
            <person name="Xue Y."/>
            <person name="Han B."/>
        </authorList>
    </citation>
    <scope>NUCLEOTIDE SEQUENCE [LARGE SCALE GENOMIC DNA]</scope>
    <source>
        <strain>cv. Nipponbare</strain>
    </source>
</reference>
<reference key="3">
    <citation type="journal article" date="2005" name="Nature">
        <title>The map-based sequence of the rice genome.</title>
        <authorList>
            <consortium name="International rice genome sequencing project (IRGSP)"/>
        </authorList>
    </citation>
    <scope>NUCLEOTIDE SEQUENCE [LARGE SCALE GENOMIC DNA]</scope>
    <source>
        <strain>cv. Nipponbare</strain>
    </source>
</reference>
<reference key="4">
    <citation type="journal article" date="2008" name="Nucleic Acids Res.">
        <title>The rice annotation project database (RAP-DB): 2008 update.</title>
        <authorList>
            <consortium name="The rice annotation project (RAP)"/>
        </authorList>
    </citation>
    <scope>GENOME REANNOTATION</scope>
    <source>
        <strain>cv. Nipponbare</strain>
    </source>
</reference>
<reference key="5">
    <citation type="journal article" date="2013" name="Rice">
        <title>Improvement of the Oryza sativa Nipponbare reference genome using next generation sequence and optical map data.</title>
        <authorList>
            <person name="Kawahara Y."/>
            <person name="de la Bastide M."/>
            <person name="Hamilton J.P."/>
            <person name="Kanamori H."/>
            <person name="McCombie W.R."/>
            <person name="Ouyang S."/>
            <person name="Schwartz D.C."/>
            <person name="Tanaka T."/>
            <person name="Wu J."/>
            <person name="Zhou S."/>
            <person name="Childs K.L."/>
            <person name="Davidson R.M."/>
            <person name="Lin H."/>
            <person name="Quesada-Ocampo L."/>
            <person name="Vaillancourt B."/>
            <person name="Sakai H."/>
            <person name="Lee S.S."/>
            <person name="Kim J."/>
            <person name="Numa H."/>
            <person name="Itoh T."/>
            <person name="Buell C.R."/>
            <person name="Matsumoto T."/>
        </authorList>
    </citation>
    <scope>GENOME REANNOTATION</scope>
    <source>
        <strain>cv. Nipponbare</strain>
    </source>
</reference>
<reference key="6">
    <citation type="journal article" date="2005" name="PLoS Biol.">
        <title>The genomes of Oryza sativa: a history of duplications.</title>
        <authorList>
            <person name="Yu J."/>
            <person name="Wang J."/>
            <person name="Lin W."/>
            <person name="Li S."/>
            <person name="Li H."/>
            <person name="Zhou J."/>
            <person name="Ni P."/>
            <person name="Dong W."/>
            <person name="Hu S."/>
            <person name="Zeng C."/>
            <person name="Zhang J."/>
            <person name="Zhang Y."/>
            <person name="Li R."/>
            <person name="Xu Z."/>
            <person name="Li S."/>
            <person name="Li X."/>
            <person name="Zheng H."/>
            <person name="Cong L."/>
            <person name="Lin L."/>
            <person name="Yin J."/>
            <person name="Geng J."/>
            <person name="Li G."/>
            <person name="Shi J."/>
            <person name="Liu J."/>
            <person name="Lv H."/>
            <person name="Li J."/>
            <person name="Wang J."/>
            <person name="Deng Y."/>
            <person name="Ran L."/>
            <person name="Shi X."/>
            <person name="Wang X."/>
            <person name="Wu Q."/>
            <person name="Li C."/>
            <person name="Ren X."/>
            <person name="Wang J."/>
            <person name="Wang X."/>
            <person name="Li D."/>
            <person name="Liu D."/>
            <person name="Zhang X."/>
            <person name="Ji Z."/>
            <person name="Zhao W."/>
            <person name="Sun Y."/>
            <person name="Zhang Z."/>
            <person name="Bao J."/>
            <person name="Han Y."/>
            <person name="Dong L."/>
            <person name="Ji J."/>
            <person name="Chen P."/>
            <person name="Wu S."/>
            <person name="Liu J."/>
            <person name="Xiao Y."/>
            <person name="Bu D."/>
            <person name="Tan J."/>
            <person name="Yang L."/>
            <person name="Ye C."/>
            <person name="Zhang J."/>
            <person name="Xu J."/>
            <person name="Zhou Y."/>
            <person name="Yu Y."/>
            <person name="Zhang B."/>
            <person name="Zhuang S."/>
            <person name="Wei H."/>
            <person name="Liu B."/>
            <person name="Lei M."/>
            <person name="Yu H."/>
            <person name="Li Y."/>
            <person name="Xu H."/>
            <person name="Wei S."/>
            <person name="He X."/>
            <person name="Fang L."/>
            <person name="Zhang Z."/>
            <person name="Zhang Y."/>
            <person name="Huang X."/>
            <person name="Su Z."/>
            <person name="Tong W."/>
            <person name="Li J."/>
            <person name="Tong Z."/>
            <person name="Li S."/>
            <person name="Ye J."/>
            <person name="Wang L."/>
            <person name="Fang L."/>
            <person name="Lei T."/>
            <person name="Chen C.-S."/>
            <person name="Chen H.-C."/>
            <person name="Xu Z."/>
            <person name="Li H."/>
            <person name="Huang H."/>
            <person name="Zhang F."/>
            <person name="Xu H."/>
            <person name="Li N."/>
            <person name="Zhao C."/>
            <person name="Li S."/>
            <person name="Dong L."/>
            <person name="Huang Y."/>
            <person name="Li L."/>
            <person name="Xi Y."/>
            <person name="Qi Q."/>
            <person name="Li W."/>
            <person name="Zhang B."/>
            <person name="Hu W."/>
            <person name="Zhang Y."/>
            <person name="Tian X."/>
            <person name="Jiao Y."/>
            <person name="Liang X."/>
            <person name="Jin J."/>
            <person name="Gao L."/>
            <person name="Zheng W."/>
            <person name="Hao B."/>
            <person name="Liu S.-M."/>
            <person name="Wang W."/>
            <person name="Yuan L."/>
            <person name="Cao M."/>
            <person name="McDermott J."/>
            <person name="Samudrala R."/>
            <person name="Wang J."/>
            <person name="Wong G.K.-S."/>
            <person name="Yang H."/>
        </authorList>
    </citation>
    <scope>NUCLEOTIDE SEQUENCE [LARGE SCALE GENOMIC DNA]</scope>
    <source>
        <strain>cv. Nipponbare</strain>
    </source>
</reference>
<reference key="7">
    <citation type="journal article" date="2003" name="Science">
        <title>Collection, mapping, and annotation of over 28,000 cDNA clones from japonica rice.</title>
        <authorList>
            <consortium name="The rice full-length cDNA consortium"/>
        </authorList>
    </citation>
    <scope>NUCLEOTIDE SEQUENCE [LARGE SCALE MRNA] OF 47-1248</scope>
    <source>
        <strain>cv. Nipponbare</strain>
    </source>
</reference>
<reference key="8">
    <citation type="journal article" date="2009" name="Ann. Bot.">
        <title>Evaluating the microtubule cytoskeleton and its interacting proteins in monocots by mining the rice genome.</title>
        <authorList>
            <person name="Guo L."/>
            <person name="Ho C.M."/>
            <person name="Kong Z."/>
            <person name="Lee Y.R."/>
            <person name="Qian Q."/>
            <person name="Liu B."/>
        </authorList>
    </citation>
    <scope>GENE FAMILY</scope>
    <scope>NOMENCLATURE</scope>
</reference>
<gene>
    <name evidence="8" type="primary">KIN14I</name>
    <name evidence="7" type="synonym">KCBP</name>
    <name evidence="9" type="ordered locus">Os04g0666900</name>
    <name evidence="8" type="ordered locus">LOC_Os04g57140</name>
    <name evidence="11" type="ORF">OsJ_16543</name>
    <name evidence="10" type="ORF">OSJNBa0087O24.20</name>
</gene>
<protein>
    <recommendedName>
        <fullName evidence="8">Kinesin-like protein KIN-14I</fullName>
    </recommendedName>
    <alternativeName>
        <fullName evidence="8">Kinesin-like calmodulin-binding protein</fullName>
        <shortName evidence="7">OsKCBP</shortName>
    </alternativeName>
</protein>
<keyword id="KW-0067">ATP-binding</keyword>
<keyword id="KW-0112">Calmodulin-binding</keyword>
<keyword id="KW-0175">Coiled coil</keyword>
<keyword id="KW-0963">Cytoplasm</keyword>
<keyword id="KW-0206">Cytoskeleton</keyword>
<keyword id="KW-0493">Microtubule</keyword>
<keyword id="KW-0505">Motor protein</keyword>
<keyword id="KW-0547">Nucleotide-binding</keyword>
<keyword id="KW-1185">Reference proteome</keyword>
<proteinExistence type="evidence at transcript level"/>
<feature type="chain" id="PRO_0000403274" description="Kinesin-like protein KIN-14I">
    <location>
        <begin position="1"/>
        <end position="1248"/>
    </location>
</feature>
<feature type="domain" description="MyTH4" evidence="5">
    <location>
        <begin position="88"/>
        <end position="244"/>
    </location>
</feature>
<feature type="domain" description="FERM" evidence="3">
    <location>
        <begin position="249"/>
        <end position="563"/>
    </location>
</feature>
<feature type="domain" description="Kinesin motor" evidence="4">
    <location>
        <begin position="872"/>
        <end position="1193"/>
    </location>
</feature>
<feature type="region of interest" description="Disordered" evidence="6">
    <location>
        <begin position="675"/>
        <end position="704"/>
    </location>
</feature>
<feature type="region of interest" description="Calmodulin-binding" evidence="1">
    <location>
        <begin position="1201"/>
        <end position="1223"/>
    </location>
</feature>
<feature type="region of interest" description="Disordered" evidence="6">
    <location>
        <begin position="1220"/>
        <end position="1248"/>
    </location>
</feature>
<feature type="coiled-coil region" evidence="2">
    <location>
        <begin position="586"/>
        <end position="659"/>
    </location>
</feature>
<feature type="coiled-coil region" evidence="2">
    <location>
        <begin position="708"/>
        <end position="799"/>
    </location>
</feature>
<feature type="compositionally biased region" description="Polar residues" evidence="6">
    <location>
        <begin position="679"/>
        <end position="693"/>
    </location>
</feature>
<feature type="compositionally biased region" description="Basic and acidic residues" evidence="6">
    <location>
        <begin position="1234"/>
        <end position="1248"/>
    </location>
</feature>
<feature type="binding site" evidence="4">
    <location>
        <begin position="953"/>
        <end position="960"/>
    </location>
    <ligand>
        <name>ATP</name>
        <dbReference type="ChEBI" id="CHEBI:30616"/>
    </ligand>
</feature>
<feature type="sequence conflict" description="In Ref. 7; AK073209." evidence="8" ref="7">
    <original>E</original>
    <variation>G</variation>
    <location>
        <position position="605"/>
    </location>
</feature>
<evidence type="ECO:0000250" key="1">
    <source>
        <dbReference type="UniProtKB" id="Q9FHN8"/>
    </source>
</evidence>
<evidence type="ECO:0000255" key="2"/>
<evidence type="ECO:0000255" key="3">
    <source>
        <dbReference type="PROSITE-ProRule" id="PRU00084"/>
    </source>
</evidence>
<evidence type="ECO:0000255" key="4">
    <source>
        <dbReference type="PROSITE-ProRule" id="PRU00283"/>
    </source>
</evidence>
<evidence type="ECO:0000255" key="5">
    <source>
        <dbReference type="PROSITE-ProRule" id="PRU00359"/>
    </source>
</evidence>
<evidence type="ECO:0000256" key="6">
    <source>
        <dbReference type="SAM" id="MobiDB-lite"/>
    </source>
</evidence>
<evidence type="ECO:0000303" key="7">
    <source>
    </source>
</evidence>
<evidence type="ECO:0000305" key="8"/>
<evidence type="ECO:0000312" key="9">
    <source>
        <dbReference type="EMBL" id="BAS91515.1"/>
    </source>
</evidence>
<evidence type="ECO:0000312" key="10">
    <source>
        <dbReference type="EMBL" id="CAE03597.1"/>
    </source>
</evidence>
<evidence type="ECO:0000312" key="11">
    <source>
        <dbReference type="EMBL" id="EAZ32332.1"/>
    </source>
</evidence>
<sequence length="1248" mass="141786">MNGGGASGGDGYDSDGYSFAPPTPTTLSMSIPPELAGAIPLIDRFQVEGFLKAMQKQIHSAGKRGFFSKKSVGPHVREKFTLEDMLCFQKDPIPTSLLKISSDLVSRSIKLFHVILKYMGIDSPAIISLDERIELVAKLYKHTLKRSELRDELFAQISKQTRNNPDRAWLIRAWELMYLCASSMPPSKDIGAYLSEYVHYIAHGATTDSDVRVLALNTLNALKRSVKAGPRVTIPAREEIEALLSSRKLTTIVFFLDETFEEITYDMATTVADAVEELAGIIKLSVYSSFSLFECRKVVNGSKSSDVGNEEYIGLDDNKYIGDLLSEFKAAKDRNKGEILHCKLVFKKRLFRESDEAITDPMFVQLSYVQLQHDYILGNYPVGRDDAAQLSALQILVEIGFVDNPESCVEWISLLERFLPRQVAITRAKRDWELDIVSRYQLMEHLSKDDARQQFLRILRTLPYGNSVFFSVRKIDDPIGLLPGRIILGINKRGVHFFRPVPKEYLHSAELRDIMQFGSSNTAVFFKMRVAGVLHIFQFETKQGEEICVALQTHINDVMLRRYSKARSATSAVSQNDVSQTYKPPNIEIYEKRVQELSKAVEESERKADLLNEELQKKTKQERDMQKELEGLRDTLQSERQSIKEVTNDLDKLKSLCDEKDSSLQASLMEKTRLETRLKSGQGQESSNRTGVSGNHFERDTLPTVGTVNNSIEMLAKLEEELKSCKKELDASKELSKKLTMENNLLDQKVQRLERAKSEEKSNMERVYEDECCKLKSRIAELEQKLESRTRSLNVTESTLALRNAEVDTLQNSLKELDELREFKADVDRKNQQTAEILKRQGAQLIELENLYKQEQVLRKRYYNTIEDMKGKIRVFCRLRPLNDKELIEKDKNIVCSPDEFTVAHPWKDDKSKQHIYDRVFDANTTQEEVFEDTKYLVQSAVDGYNVCIFAYGQTGSGKTFTIYGSENNPGLTPRATSELFRVIKRDGHKYSFSLKAYMVELYQDNLVDLLLAKNATHQKLEIKKDSKGVVTVENVTVVNISSFEELRAIILRGSERRHTAGTNMNVESSRSHLILSIIIESTNLQTQSYARGKLSFVDLAGSERVKKSGSAGKQLKEAQSINKSLSALADVIGALSSDGQHIPYRNHKLTMLMSDSLGGNAKTLMFVNVSPAESNLEETYNSLMYASRVRCIVNDTSKHVAPKEIMRLKKLIAYWKEQAGKRSEDDDLEEIQEERTPKEKADNRLTS</sequence>
<dbReference type="EMBL" id="AY224540">
    <property type="protein sequence ID" value="AAO72660.1"/>
    <property type="molecule type" value="mRNA"/>
</dbReference>
<dbReference type="EMBL" id="AL606646">
    <property type="protein sequence ID" value="CAE03597.1"/>
    <property type="molecule type" value="Genomic_DNA"/>
</dbReference>
<dbReference type="EMBL" id="AP008210">
    <property type="protein sequence ID" value="BAF16096.1"/>
    <property type="status" value="ALT_SEQ"/>
    <property type="molecule type" value="Genomic_DNA"/>
</dbReference>
<dbReference type="EMBL" id="AP014960">
    <property type="protein sequence ID" value="BAS91515.1"/>
    <property type="status" value="ALT_SEQ"/>
    <property type="molecule type" value="Genomic_DNA"/>
</dbReference>
<dbReference type="EMBL" id="CM000141">
    <property type="protein sequence ID" value="EAZ32332.1"/>
    <property type="status" value="ALT_SEQ"/>
    <property type="molecule type" value="Genomic_DNA"/>
</dbReference>
<dbReference type="EMBL" id="AK073209">
    <property type="status" value="NOT_ANNOTATED_CDS"/>
    <property type="molecule type" value="mRNA"/>
</dbReference>
<dbReference type="RefSeq" id="NP_001389382.1">
    <property type="nucleotide sequence ID" value="NM_001402453.1"/>
</dbReference>
<dbReference type="RefSeq" id="XP_015636574.1">
    <property type="nucleotide sequence ID" value="XM_015781088.1"/>
</dbReference>
<dbReference type="SMR" id="Q7XPJ0"/>
<dbReference type="FunCoup" id="Q7XPJ0">
    <property type="interactions" value="1187"/>
</dbReference>
<dbReference type="STRING" id="39947.Q7XPJ0"/>
<dbReference type="PaxDb" id="39947-Q7XPJ0"/>
<dbReference type="GeneID" id="4337322"/>
<dbReference type="KEGG" id="dosa:Os04g0666900"/>
<dbReference type="eggNOG" id="KOG0239">
    <property type="taxonomic scope" value="Eukaryota"/>
</dbReference>
<dbReference type="eggNOG" id="KOG4229">
    <property type="taxonomic scope" value="Eukaryota"/>
</dbReference>
<dbReference type="HOGENOM" id="CLU_001485_14_0_1"/>
<dbReference type="InParanoid" id="Q7XPJ0"/>
<dbReference type="OrthoDB" id="3176171at2759"/>
<dbReference type="Proteomes" id="UP000000763">
    <property type="component" value="Chromosome 4"/>
</dbReference>
<dbReference type="Proteomes" id="UP000007752">
    <property type="component" value="Chromosome 4"/>
</dbReference>
<dbReference type="Proteomes" id="UP000059680">
    <property type="component" value="Chromosome 4"/>
</dbReference>
<dbReference type="GO" id="GO:0005737">
    <property type="term" value="C:cytoplasm"/>
    <property type="evidence" value="ECO:0000318"/>
    <property type="project" value="GO_Central"/>
</dbReference>
<dbReference type="GO" id="GO:0005871">
    <property type="term" value="C:kinesin complex"/>
    <property type="evidence" value="ECO:0000318"/>
    <property type="project" value="GO_Central"/>
</dbReference>
<dbReference type="GO" id="GO:0005874">
    <property type="term" value="C:microtubule"/>
    <property type="evidence" value="ECO:0000318"/>
    <property type="project" value="GO_Central"/>
</dbReference>
<dbReference type="GO" id="GO:0005524">
    <property type="term" value="F:ATP binding"/>
    <property type="evidence" value="ECO:0007669"/>
    <property type="project" value="UniProtKB-KW"/>
</dbReference>
<dbReference type="GO" id="GO:0016887">
    <property type="term" value="F:ATP hydrolysis activity"/>
    <property type="evidence" value="ECO:0000318"/>
    <property type="project" value="GO_Central"/>
</dbReference>
<dbReference type="GO" id="GO:0005516">
    <property type="term" value="F:calmodulin binding"/>
    <property type="evidence" value="ECO:0007669"/>
    <property type="project" value="UniProtKB-KW"/>
</dbReference>
<dbReference type="GO" id="GO:0008017">
    <property type="term" value="F:microtubule binding"/>
    <property type="evidence" value="ECO:0000318"/>
    <property type="project" value="GO_Central"/>
</dbReference>
<dbReference type="GO" id="GO:0003777">
    <property type="term" value="F:microtubule motor activity"/>
    <property type="evidence" value="ECO:0000318"/>
    <property type="project" value="GO_Central"/>
</dbReference>
<dbReference type="GO" id="GO:0016491">
    <property type="term" value="F:oxidoreductase activity"/>
    <property type="evidence" value="ECO:0007669"/>
    <property type="project" value="InterPro"/>
</dbReference>
<dbReference type="GO" id="GO:0007018">
    <property type="term" value="P:microtubule-based movement"/>
    <property type="evidence" value="ECO:0000318"/>
    <property type="project" value="GO_Central"/>
</dbReference>
<dbReference type="CDD" id="cd14473">
    <property type="entry name" value="FERM_B-lobe"/>
    <property type="match status" value="1"/>
</dbReference>
<dbReference type="CDD" id="cd13200">
    <property type="entry name" value="FERM_C_KCBP"/>
    <property type="match status" value="1"/>
</dbReference>
<dbReference type="CDD" id="cd01366">
    <property type="entry name" value="KISc_C_terminal"/>
    <property type="match status" value="1"/>
</dbReference>
<dbReference type="FunFam" id="1.20.80.10:FF:000018">
    <property type="entry name" value="Kinesin-like calmodulin binding protein"/>
    <property type="match status" value="1"/>
</dbReference>
<dbReference type="FunFam" id="3.40.850.10:FF:000041">
    <property type="entry name" value="Kinesin-like calmodulin-binding protein"/>
    <property type="match status" value="1"/>
</dbReference>
<dbReference type="FunFam" id="1.25.40.530:FF:000005">
    <property type="entry name" value="Kinesin-like calmodulin-binding protein (ZWICHEL)"/>
    <property type="match status" value="1"/>
</dbReference>
<dbReference type="FunFam" id="2.30.29.30:FF:000131">
    <property type="entry name" value="Kinesin-like calmodulin-binding protein (ZWICHEL)"/>
    <property type="match status" value="1"/>
</dbReference>
<dbReference type="FunFam" id="3.10.20.90:FF:000090">
    <property type="entry name" value="Kinesin-like calmodulin-binding protein (ZWICHEL)"/>
    <property type="match status" value="1"/>
</dbReference>
<dbReference type="Gene3D" id="1.20.80.10">
    <property type="match status" value="1"/>
</dbReference>
<dbReference type="Gene3D" id="6.10.250.760">
    <property type="match status" value="1"/>
</dbReference>
<dbReference type="Gene3D" id="3.40.850.10">
    <property type="entry name" value="Kinesin motor domain"/>
    <property type="match status" value="1"/>
</dbReference>
<dbReference type="Gene3D" id="1.25.40.530">
    <property type="entry name" value="MyTH4 domain"/>
    <property type="match status" value="1"/>
</dbReference>
<dbReference type="Gene3D" id="3.10.20.90">
    <property type="entry name" value="Phosphatidylinositol 3-kinase Catalytic Subunit, Chain A, domain 1"/>
    <property type="match status" value="1"/>
</dbReference>
<dbReference type="Gene3D" id="2.30.29.30">
    <property type="entry name" value="Pleckstrin-homology domain (PH domain)/Phosphotyrosine-binding domain (PTB)"/>
    <property type="match status" value="1"/>
</dbReference>
<dbReference type="InterPro" id="IPR019749">
    <property type="entry name" value="Band_41_domain"/>
</dbReference>
<dbReference type="InterPro" id="IPR014352">
    <property type="entry name" value="FERM/acyl-CoA-bd_prot_sf"/>
</dbReference>
<dbReference type="InterPro" id="IPR035963">
    <property type="entry name" value="FERM_2"/>
</dbReference>
<dbReference type="InterPro" id="IPR019748">
    <property type="entry name" value="FERM_central"/>
</dbReference>
<dbReference type="InterPro" id="IPR000299">
    <property type="entry name" value="FERM_domain"/>
</dbReference>
<dbReference type="InterPro" id="IPR002404">
    <property type="entry name" value="IRS_PTB"/>
</dbReference>
<dbReference type="InterPro" id="IPR027640">
    <property type="entry name" value="Kinesin-like_fam"/>
</dbReference>
<dbReference type="InterPro" id="IPR019821">
    <property type="entry name" value="Kinesin_motor_CS"/>
</dbReference>
<dbReference type="InterPro" id="IPR001752">
    <property type="entry name" value="Kinesin_motor_dom"/>
</dbReference>
<dbReference type="InterPro" id="IPR036961">
    <property type="entry name" value="Kinesin_motor_dom_sf"/>
</dbReference>
<dbReference type="InterPro" id="IPR000857">
    <property type="entry name" value="MyTH4_dom"/>
</dbReference>
<dbReference type="InterPro" id="IPR038185">
    <property type="entry name" value="MyTH4_dom_sf"/>
</dbReference>
<dbReference type="InterPro" id="IPR027417">
    <property type="entry name" value="P-loop_NTPase"/>
</dbReference>
<dbReference type="InterPro" id="IPR011993">
    <property type="entry name" value="PH-like_dom_sf"/>
</dbReference>
<dbReference type="InterPro" id="IPR011254">
    <property type="entry name" value="Prismane-like_sf"/>
</dbReference>
<dbReference type="PANTHER" id="PTHR47972:SF16">
    <property type="entry name" value="KINESIN-LIKE PROTEIN"/>
    <property type="match status" value="1"/>
</dbReference>
<dbReference type="PANTHER" id="PTHR47972">
    <property type="entry name" value="KINESIN-LIKE PROTEIN KLP-3"/>
    <property type="match status" value="1"/>
</dbReference>
<dbReference type="Pfam" id="PF00373">
    <property type="entry name" value="FERM_M"/>
    <property type="match status" value="1"/>
</dbReference>
<dbReference type="Pfam" id="PF02174">
    <property type="entry name" value="IRS"/>
    <property type="match status" value="1"/>
</dbReference>
<dbReference type="Pfam" id="PF00225">
    <property type="entry name" value="Kinesin"/>
    <property type="match status" value="1"/>
</dbReference>
<dbReference type="Pfam" id="PF00784">
    <property type="entry name" value="MyTH4"/>
    <property type="match status" value="1"/>
</dbReference>
<dbReference type="Pfam" id="PF21989">
    <property type="entry name" value="RA_2"/>
    <property type="match status" value="1"/>
</dbReference>
<dbReference type="PRINTS" id="PR00380">
    <property type="entry name" value="KINESINHEAVY"/>
</dbReference>
<dbReference type="SMART" id="SM00295">
    <property type="entry name" value="B41"/>
    <property type="match status" value="1"/>
</dbReference>
<dbReference type="SMART" id="SM00129">
    <property type="entry name" value="KISc"/>
    <property type="match status" value="1"/>
</dbReference>
<dbReference type="SMART" id="SM00139">
    <property type="entry name" value="MyTH4"/>
    <property type="match status" value="1"/>
</dbReference>
<dbReference type="SUPFAM" id="SSF52540">
    <property type="entry name" value="P-loop containing nucleoside triphosphate hydrolases"/>
    <property type="match status" value="1"/>
</dbReference>
<dbReference type="SUPFAM" id="SSF50729">
    <property type="entry name" value="PH domain-like"/>
    <property type="match status" value="1"/>
</dbReference>
<dbReference type="SUPFAM" id="SSF56821">
    <property type="entry name" value="Prismane protein-like"/>
    <property type="match status" value="1"/>
</dbReference>
<dbReference type="SUPFAM" id="SSF47031">
    <property type="entry name" value="Second domain of FERM"/>
    <property type="match status" value="1"/>
</dbReference>
<dbReference type="PROSITE" id="PS50057">
    <property type="entry name" value="FERM_3"/>
    <property type="match status" value="1"/>
</dbReference>
<dbReference type="PROSITE" id="PS00411">
    <property type="entry name" value="KINESIN_MOTOR_1"/>
    <property type="match status" value="1"/>
</dbReference>
<dbReference type="PROSITE" id="PS50067">
    <property type="entry name" value="KINESIN_MOTOR_2"/>
    <property type="match status" value="1"/>
</dbReference>
<dbReference type="PROSITE" id="PS51016">
    <property type="entry name" value="MYTH4"/>
    <property type="match status" value="1"/>
</dbReference>
<comment type="function">
    <text evidence="1">Minus-end microtubule-dependent motor protein involved in the regulation of cell division.</text>
</comment>
<comment type="subunit">
    <text evidence="1">Binds microtubules via its N-terminus containing the MyTH4 domain and binds F-actin via its FERM domain. Binding to calmodulin inhibits microtubule binding activity.</text>
</comment>
<comment type="subcellular location">
    <subcellularLocation>
        <location evidence="1">Cytoplasm</location>
        <location evidence="1">Cytoskeleton</location>
    </subcellularLocation>
</comment>
<comment type="similarity">
    <text evidence="7">Belongs to the TRAFAC class myosin-kinesin ATPase superfamily. Kinesin family. KIN-14 subfamily.</text>
</comment>
<comment type="sequence caution" evidence="8">
    <conflict type="frameshift">
        <sequence resource="EMBL" id="AK073209"/>
    </conflict>
</comment>
<comment type="sequence caution" evidence="8">
    <conflict type="erroneous gene model prediction">
        <sequence resource="EMBL-CDS" id="BAF16096"/>
    </conflict>
</comment>
<comment type="sequence caution" evidence="8">
    <conflict type="erroneous gene model prediction">
        <sequence resource="EMBL-CDS" id="BAS91515"/>
    </conflict>
</comment>
<comment type="sequence caution" evidence="8">
    <conflict type="erroneous gene model prediction">
        <sequence resource="EMBL-CDS" id="EAZ32332"/>
    </conflict>
</comment>
<name>KN14I_ORYSJ</name>